<dbReference type="EMBL" id="LC125182">
    <property type="protein sequence ID" value="BAU68218.1"/>
    <property type="molecule type" value="mRNA"/>
</dbReference>
<dbReference type="EMBL" id="UYJE01006457">
    <property type="protein sequence ID" value="VDI46190.1"/>
    <property type="molecule type" value="Genomic_DNA"/>
</dbReference>
<dbReference type="PDB" id="3WMU">
    <property type="method" value="X-ray"/>
    <property type="resolution" value="1.10 A"/>
    <property type="chains" value="A/B=39-187"/>
</dbReference>
<dbReference type="PDB" id="3WMV">
    <property type="method" value="X-ray"/>
    <property type="resolution" value="1.05 A"/>
    <property type="chains" value="A/B=39-187"/>
</dbReference>
<dbReference type="PDBsum" id="3WMU"/>
<dbReference type="PDBsum" id="3WMV"/>
<dbReference type="SMR" id="B3EWR1"/>
<dbReference type="UniLectin" id="B3EWR1"/>
<dbReference type="iPTMnet" id="B3EWR1"/>
<dbReference type="OrthoDB" id="6055087at2759"/>
<dbReference type="EvolutionaryTrace" id="B3EWR1"/>
<dbReference type="Proteomes" id="UP000596742">
    <property type="component" value="Unassembled WGS sequence"/>
</dbReference>
<dbReference type="GO" id="GO:0005534">
    <property type="term" value="F:galactose binding"/>
    <property type="evidence" value="ECO:0000314"/>
    <property type="project" value="UniProtKB"/>
</dbReference>
<dbReference type="GO" id="GO:0031640">
    <property type="term" value="P:killing of cells of another organism"/>
    <property type="evidence" value="ECO:0000314"/>
    <property type="project" value="UniProtKB"/>
</dbReference>
<dbReference type="CDD" id="cd23417">
    <property type="entry name" value="beta-trefoil_Ricin_MytiLec-like"/>
    <property type="match status" value="1"/>
</dbReference>
<dbReference type="FunFam" id="2.80.10.50:FF:000161">
    <property type="entry name" value="Lectin"/>
    <property type="match status" value="1"/>
</dbReference>
<dbReference type="Gene3D" id="2.80.10.50">
    <property type="match status" value="1"/>
</dbReference>
<feature type="signal peptide" evidence="12">
    <location>
        <begin position="1"/>
        <end position="37"/>
    </location>
</feature>
<feature type="chain" id="PRO_0000420129" description="Alpha-D-galactose-binding lectin">
    <location>
        <begin position="38"/>
        <end position="187"/>
    </location>
</feature>
<feature type="binding site" evidence="4 16">
    <location>
        <begin position="53"/>
        <end position="56"/>
    </location>
    <ligand>
        <name>N-acetyl-alpha-D-galactosamine</name>
        <dbReference type="ChEBI" id="CHEBI:40356"/>
        <label>1</label>
    </ligand>
</feature>
<feature type="binding site" evidence="4 16">
    <location>
        <position position="64"/>
    </location>
    <ligand>
        <name>N-acetyl-alpha-D-galactosamine</name>
        <dbReference type="ChEBI" id="CHEBI:40356"/>
        <label>3</label>
    </ligand>
</feature>
<feature type="binding site" evidence="4 16">
    <location>
        <begin position="72"/>
        <end position="76"/>
    </location>
    <ligand>
        <name>N-acetyl-alpha-D-galactosamine</name>
        <dbReference type="ChEBI" id="CHEBI:40356"/>
        <label>1</label>
    </ligand>
</feature>
<feature type="binding site" evidence="4 16">
    <location>
        <position position="101"/>
    </location>
    <ligand>
        <name>N-acetyl-alpha-D-galactosamine</name>
        <dbReference type="ChEBI" id="CHEBI:40356"/>
        <label>3</label>
    </ligand>
</feature>
<feature type="binding site" evidence="4 16">
    <location>
        <position position="104"/>
    </location>
    <ligand>
        <name>N-acetyl-alpha-D-galactosamine</name>
        <dbReference type="ChEBI" id="CHEBI:40356"/>
        <label>3</label>
    </ligand>
</feature>
<feature type="binding site" evidence="4 16">
    <location>
        <position position="112"/>
    </location>
    <ligand>
        <name>N-acetyl-alpha-D-galactosamine</name>
        <dbReference type="ChEBI" id="CHEBI:40356"/>
        <label>2</label>
    </ligand>
</feature>
<feature type="binding site" evidence="4 16">
    <location>
        <begin position="120"/>
        <end position="122"/>
    </location>
    <ligand>
        <name>N-acetyl-alpha-D-galactosamine</name>
        <dbReference type="ChEBI" id="CHEBI:40356"/>
        <label>3</label>
    </ligand>
</feature>
<feature type="binding site" evidence="4 16">
    <location>
        <position position="145"/>
    </location>
    <ligand>
        <name>N-acetyl-alpha-D-galactosamine</name>
        <dbReference type="ChEBI" id="CHEBI:40356"/>
        <label>2</label>
    </ligand>
</feature>
<feature type="binding site" evidence="4 16">
    <location>
        <position position="148"/>
    </location>
    <ligand>
        <name>N-acetyl-alpha-D-galactosamine</name>
        <dbReference type="ChEBI" id="CHEBI:40356"/>
        <label>2</label>
    </ligand>
</feature>
<feature type="binding site" evidence="4 16">
    <location>
        <position position="156"/>
    </location>
    <ligand>
        <name>N-acetyl-alpha-D-galactosamine</name>
        <dbReference type="ChEBI" id="CHEBI:40356"/>
        <label>1</label>
    </ligand>
</feature>
<feature type="binding site" evidence="4 16">
    <location>
        <begin position="164"/>
        <end position="166"/>
    </location>
    <ligand>
        <name>N-acetyl-alpha-D-galactosamine</name>
        <dbReference type="ChEBI" id="CHEBI:40356"/>
        <label>2</label>
    </ligand>
</feature>
<feature type="site" description="Removed" evidence="10">
    <location>
        <position position="38"/>
    </location>
</feature>
<feature type="modified residue" description="N-acetylthreonine" evidence="1">
    <location>
        <position position="39"/>
    </location>
</feature>
<feature type="mutagenesis site" description="Loss of homodimerization. Weak hemagglutinating activity. Loss of cytotoxic effect on the Burkitt's lymphoma (Raji) cell line." evidence="4">
    <original>FF</original>
    <variation>DS</variation>
    <location>
        <begin position="131"/>
        <end position="132"/>
    </location>
</feature>
<feature type="strand" evidence="17">
    <location>
        <begin position="41"/>
        <end position="45"/>
    </location>
</feature>
<feature type="turn" evidence="17">
    <location>
        <begin position="46"/>
        <end position="48"/>
    </location>
</feature>
<feature type="strand" evidence="17">
    <location>
        <begin position="51"/>
        <end position="54"/>
    </location>
</feature>
<feature type="strand" evidence="17">
    <location>
        <begin position="65"/>
        <end position="71"/>
    </location>
</feature>
<feature type="helix" evidence="17">
    <location>
        <begin position="75"/>
        <end position="77"/>
    </location>
</feature>
<feature type="strand" evidence="17">
    <location>
        <begin position="79"/>
        <end position="85"/>
    </location>
</feature>
<feature type="strand" evidence="17">
    <location>
        <begin position="88"/>
        <end position="93"/>
    </location>
</feature>
<feature type="turn" evidence="17">
    <location>
        <begin position="94"/>
        <end position="96"/>
    </location>
</feature>
<feature type="strand" evidence="17">
    <location>
        <begin position="99"/>
        <end position="102"/>
    </location>
</feature>
<feature type="strand" evidence="17">
    <location>
        <begin position="114"/>
        <end position="119"/>
    </location>
</feature>
<feature type="helix" evidence="17">
    <location>
        <begin position="123"/>
        <end position="125"/>
    </location>
</feature>
<feature type="strand" evidence="17">
    <location>
        <begin position="127"/>
        <end position="130"/>
    </location>
</feature>
<feature type="turn" evidence="17">
    <location>
        <begin position="131"/>
        <end position="134"/>
    </location>
</feature>
<feature type="strand" evidence="17">
    <location>
        <begin position="135"/>
        <end position="138"/>
    </location>
</feature>
<feature type="strand" evidence="17">
    <location>
        <begin position="143"/>
        <end position="146"/>
    </location>
</feature>
<feature type="strand" evidence="17">
    <location>
        <begin position="157"/>
        <end position="163"/>
    </location>
</feature>
<feature type="helix" evidence="17">
    <location>
        <begin position="167"/>
        <end position="169"/>
    </location>
</feature>
<feature type="strand" evidence="17">
    <location>
        <begin position="171"/>
        <end position="175"/>
    </location>
</feature>
<feature type="strand" evidence="17">
    <location>
        <begin position="178"/>
        <end position="182"/>
    </location>
</feature>
<proteinExistence type="evidence at protein level"/>
<protein>
    <recommendedName>
        <fullName evidence="5 7">Alpha-D-galactose-binding lectin</fullName>
    </recommendedName>
    <alternativeName>
        <fullName evidence="8">Galactose-binding lectin</fullName>
    </alternativeName>
    <alternativeName>
        <fullName evidence="5">Lectin</fullName>
    </alternativeName>
    <alternativeName>
        <fullName evidence="5 6 8">MytiLec</fullName>
    </alternativeName>
    <alternativeName>
        <fullName evidence="7">MytiLec-1</fullName>
    </alternativeName>
    <alternativeName>
        <fullName evidence="6 7">R-type lectin</fullName>
    </alternativeName>
</protein>
<organism>
    <name type="scientific">Mytilus galloprovincialis</name>
    <name type="common">Mediterranean mussel</name>
    <dbReference type="NCBI Taxonomy" id="29158"/>
    <lineage>
        <taxon>Eukaryota</taxon>
        <taxon>Metazoa</taxon>
        <taxon>Spiralia</taxon>
        <taxon>Lophotrochozoa</taxon>
        <taxon>Mollusca</taxon>
        <taxon>Bivalvia</taxon>
        <taxon>Autobranchia</taxon>
        <taxon>Pteriomorphia</taxon>
        <taxon>Mytilida</taxon>
        <taxon>Mytiloidea</taxon>
        <taxon>Mytilidae</taxon>
        <taxon>Mytilinae</taxon>
        <taxon>Mytilus</taxon>
    </lineage>
</organism>
<accession>B3EWR1</accession>
<accession>A0A140KFU1</accession>
<keyword id="KW-0002">3D-structure</keyword>
<keyword id="KW-0007">Acetylation</keyword>
<keyword id="KW-0903">Direct protein sequencing</keyword>
<keyword id="KW-0348">Hemagglutinin</keyword>
<keyword id="KW-0430">Lectin</keyword>
<keyword id="KW-1185">Reference proteome</keyword>
<keyword id="KW-0732">Signal</keyword>
<reference key="1">
    <citation type="journal article" date="2016" name="Mar. Drugs">
        <title>cDNA and Gene Structure of MytiLec-1, A Bacteriostatic R-Type Lectin from the Mediterranean Mussel (Mytilus galloprovincialis).</title>
        <authorList>
            <person name="Hasan I."/>
            <person name="Gerdol M."/>
            <person name="Fujii Y."/>
            <person name="Rajia S."/>
            <person name="Koide Y."/>
            <person name="Yamamoto D."/>
            <person name="Kawsar S.M."/>
            <person name="Ozeki Y."/>
        </authorList>
    </citation>
    <scope>NUCLEOTIDE SEQUENCE [MRNA]</scope>
    <scope>FUNCTION</scope>
    <scope>ACTIVITY REGULATION</scope>
    <scope>TISSUE SPECIFICITY</scope>
</reference>
<reference evidence="9" key="2">
    <citation type="journal article" date="2012" name="J. Biol. Chem.">
        <title>A lectin from the mussel Mytilus galloprovincialis has a highly novel primary structure and induces glycan-mediated cytotoxicity of globotriaosylceramide-expressing lymphoma cells.</title>
        <authorList>
            <person name="Fujii Y."/>
            <person name="Dohmae N."/>
            <person name="Takio K."/>
            <person name="Kawsar S.M."/>
            <person name="Matsumoto R."/>
            <person name="Hasan I."/>
            <person name="Koide Y."/>
            <person name="Kanaly R.A."/>
            <person name="Yasumitsu H."/>
            <person name="Ogawa Y."/>
            <person name="Sugawara S."/>
            <person name="Hosono M."/>
            <person name="Nitta K."/>
            <person name="Hamako J."/>
            <person name="Matsui T."/>
            <person name="Ozeki Y."/>
        </authorList>
    </citation>
    <scope>PROTEIN SEQUENCE OF 39-187</scope>
    <scope>FUNCTION</scope>
    <scope>MASS SPECTROMETRY</scope>
    <scope>ACETYLATION AT THR-39</scope>
    <source>
        <tissue evidence="1">Mantle</tissue>
    </source>
</reference>
<reference key="3">
    <citation type="journal article" date="2015" name="Mar. Drugs">
        <title>MytiLec, a Mussel R-Type Lectin, Interacts with Surface Glycan Gb3 on Burkitt's Lymphoma Cells to Trigger Apoptosis through Multiple Pathways.</title>
        <authorList>
            <person name="Hasan I."/>
            <person name="Sugawara S."/>
            <person name="Fujii Y."/>
            <person name="Koide Y."/>
            <person name="Terada D."/>
            <person name="Iimura N."/>
            <person name="Fujiwara T."/>
            <person name="Takahashi K.G."/>
            <person name="Kojima N."/>
            <person name="Rajia S."/>
            <person name="Kawsar S.M."/>
            <person name="Kanaly R.A."/>
            <person name="Uchiyama H."/>
            <person name="Hosono M."/>
            <person name="Ogawa Y."/>
            <person name="Fujita H."/>
            <person name="Hamako J."/>
            <person name="Matsui T."/>
            <person name="Ozeki Y."/>
        </authorList>
    </citation>
    <scope>FUNCTION</scope>
    <scope>BIOTECHNOLOGY</scope>
</reference>
<reference evidence="14 15" key="4">
    <citation type="journal article" date="2016" name="Sci. Rep.">
        <title>Crystal structure of MytiLec, a galactose-binding lectin from the mussel Mytilus galloprovincialis with cytotoxicity against certain cancer cell types.</title>
        <authorList>
            <person name="Terada D."/>
            <person name="Kawai F."/>
            <person name="Noguchi H."/>
            <person name="Unzai S."/>
            <person name="Hasan I."/>
            <person name="Fujii Y."/>
            <person name="Park S.Y."/>
            <person name="Ozeki Y."/>
            <person name="Tame J.R."/>
        </authorList>
    </citation>
    <scope>X-RAY CRYSTALLOGRAPHY (1.05 ANGSTROMS) OF 39-187 AND IN COMPLEX WITH N-ACETYL-ALPHA-D-GALACTOSAMINE</scope>
    <scope>FUNCTION</scope>
    <scope>SUBUNIT</scope>
    <scope>BIOTECHNOLOGY</scope>
    <scope>MUTAGENESIS OF PHE-131 AND PHE-132</scope>
</reference>
<sequence length="187" mass="21083">MTFAKQSCFNSIILLSIATSYFKIGHKISELGNRIEKMTTFLIKHKASGKFLHPKGGSSNPANDTNLVLHSDIHERMYFQFDVVDERWGYIKHAASGKIVHPLGGKADPPNETKLVLHQDRHDRALFAMDFFNDNIIHKAGKYVHPKGGSTNPPNETLTVMHGDKHGAMEFIFVSPKNKDKRVLVYV</sequence>
<comment type="function">
    <text evidence="1 2 3 4">Alpha-D-galactose-binding lectin (PubMed:23093409, PubMed:27187419, PubMed:27321048). Binds D-GalNAc, but not glucose or its derivatives (PubMed:27321048). Has hemagglutinating activity towards rabbit erythrocytes (PubMed:23093409, PubMed:27321048). Agglutinates bacteria. Has bacteriostatic activity on both Gram-positive and Gram-negative bacteria including B.subtilis, S.aureus, E.coli and V.parahaemolyticus, respectively (PubMed:27187419). Has a dose-dependent cytotoxic effect on the human globotriaosylceramide (Gb3)-expressing Epstein-Barr virus (EBV)-positive Burkitt's lymphoma (Raji) cell line (PubMed:23093409, PubMed:27321048). Has dose-dependent cytotoxic effect on another Burkitt's lymphoma (Ramos) cell line, which does not possess the EBV genome, but also expresses Gb3. Binds to Gb3 in these cells leading to phosphorylation of MEK1/2, ERK1/2, JNK and p38 kinase, activation of caspase-9/3 and to expression of p21 and tumor necrosis factor (TNF)-alpha (PubMed:26694420). No cytotoxic effect on the human chronic myelogenous leukemia (K-562) cell line, which does not express Gb3 (PubMed:23093409, PubMed:26694420). May be involved in innate immunity acting as an antibacterial or antifungal agent (PubMed:26694420, PubMed:27321048). May be a pattern recognition receptor (PRR) involved in recognition of glycans found on parasitic or symbiotic microorganisms (PubMed:27187419).</text>
</comment>
<comment type="activity regulation">
    <text evidence="3">Agglutination of E.coli is inhibited by alpha-galactoside melibiose, but not by beta-galactoside lactose.</text>
</comment>
<comment type="subunit">
    <text evidence="4">Homodimer.</text>
</comment>
<comment type="tissue specificity">
    <text evidence="3">Highest expression in the posterior part of the mantle. Highly expressed in gills and to a lesser extent in mid mantle and anterior muscle. Lowest expression in digestive gland and posterior adductor muscle. Scarcely detectable in hemocytes.</text>
</comment>
<comment type="mass spectrometry" mass="16812.59" error="10.63" method="Electrospray" evidence="1">
    <text>The mass determined is that of range 39-187.</text>
</comment>
<comment type="biotechnology">
    <text evidence="11 13">This protein may have potential for the development of new diagnostic agents or treatments for cancer since Gb3 is a cell-surface marker expressed by several different cancer cell lines.</text>
</comment>
<comment type="caution">
    <text evidence="1">Was originally thought to be a monomer in solution on the basis of gel filtration.</text>
</comment>
<name>LEC1_MYTGA</name>
<evidence type="ECO:0000269" key="1">
    <source>
    </source>
</evidence>
<evidence type="ECO:0000269" key="2">
    <source>
    </source>
</evidence>
<evidence type="ECO:0000269" key="3">
    <source>
    </source>
</evidence>
<evidence type="ECO:0000269" key="4">
    <source>
    </source>
</evidence>
<evidence type="ECO:0000303" key="5">
    <source>
    </source>
</evidence>
<evidence type="ECO:0000303" key="6">
    <source>
    </source>
</evidence>
<evidence type="ECO:0000303" key="7">
    <source>
    </source>
</evidence>
<evidence type="ECO:0000303" key="8">
    <source>
    </source>
</evidence>
<evidence type="ECO:0000305" key="9"/>
<evidence type="ECO:0000305" key="10">
    <source>
    </source>
</evidence>
<evidence type="ECO:0000305" key="11">
    <source>
    </source>
</evidence>
<evidence type="ECO:0000305" key="12">
    <source>
    </source>
</evidence>
<evidence type="ECO:0000305" key="13">
    <source>
    </source>
</evidence>
<evidence type="ECO:0000312" key="14">
    <source>
        <dbReference type="PDB" id="3WMU"/>
    </source>
</evidence>
<evidence type="ECO:0000312" key="15">
    <source>
        <dbReference type="PDB" id="3WMV"/>
    </source>
</evidence>
<evidence type="ECO:0007744" key="16">
    <source>
        <dbReference type="PDB" id="3WMV"/>
    </source>
</evidence>
<evidence type="ECO:0007829" key="17">
    <source>
        <dbReference type="PDB" id="3WMV"/>
    </source>
</evidence>